<evidence type="ECO:0000255" key="1">
    <source>
        <dbReference type="HAMAP-Rule" id="MF_00335"/>
    </source>
</evidence>
<evidence type="ECO:0000255" key="2">
    <source>
        <dbReference type="PROSITE-ProRule" id="PRU01175"/>
    </source>
</evidence>
<sequence>MIESLIALIAAIVGLGIGYLVAKKINDAKYEIFVEQAKAKAKAIEYEAELILKDAKNSILNAELEVKKKYEEKTHKIQKDFNQKFDDLSKKEQKLQQEEEKLKEDKEYLCKSQKHIQNLQSDVDKLKNKYQEKLDDVLKILEHSTGLTQNEAKEIILKKVEENSREQIAHIVRKYEEEAKNEAKRKANFIIAQATSRFAGEFAAERLINVINIKNDELKGRIIGKEGRNVKTLEMVLGVDIIIDDTPGAIIVSCFNLYRRAIATKVIELLVEDGRIQPARIEEIHEKVCKEFDSAILEEGETIVMDLGLNKIHPEIVKLIGKLKYRASYGQNALAHSLEVAHLAGIIAAECGGDENLARRAGILHDIGKALTHDFEGSHVDLGAELCKRYKEHPVVINAIYAHHGHEEATSIESAAVCAADTLSAARPGARREVLEAFLKRVSELEDIAKSKEGIKNAYAINAGREIRVIANAQLVNDDESVLLAKEIAAEIQEKMQYPGEIKVNVIRELRAVEYAK</sequence>
<protein>
    <recommendedName>
        <fullName evidence="1">Ribonuclease Y</fullName>
        <shortName evidence="1">RNase Y</shortName>
        <ecNumber evidence="1">3.1.-.-</ecNumber>
    </recommendedName>
</protein>
<comment type="function">
    <text evidence="1">Endoribonuclease that initiates mRNA decay.</text>
</comment>
<comment type="subcellular location">
    <subcellularLocation>
        <location evidence="1">Cell membrane</location>
        <topology evidence="1">Single-pass membrane protein</topology>
    </subcellularLocation>
</comment>
<comment type="similarity">
    <text evidence="1">Belongs to the RNase Y family.</text>
</comment>
<gene>
    <name evidence="1" type="primary">rny</name>
    <name type="ordered locus">CJJ81176_1223</name>
</gene>
<name>RNY_CAMJJ</name>
<dbReference type="EC" id="3.1.-.-" evidence="1"/>
<dbReference type="EMBL" id="CP000538">
    <property type="protein sequence ID" value="EAQ72247.1"/>
    <property type="molecule type" value="Genomic_DNA"/>
</dbReference>
<dbReference type="RefSeq" id="WP_002867373.1">
    <property type="nucleotide sequence ID" value="NC_008787.1"/>
</dbReference>
<dbReference type="SMR" id="A1W0J3"/>
<dbReference type="KEGG" id="cjj:CJJ81176_1223"/>
<dbReference type="eggNOG" id="COG1418">
    <property type="taxonomic scope" value="Bacteria"/>
</dbReference>
<dbReference type="HOGENOM" id="CLU_028328_1_0_7"/>
<dbReference type="Proteomes" id="UP000000646">
    <property type="component" value="Chromosome"/>
</dbReference>
<dbReference type="GO" id="GO:0005886">
    <property type="term" value="C:plasma membrane"/>
    <property type="evidence" value="ECO:0007669"/>
    <property type="project" value="UniProtKB-SubCell"/>
</dbReference>
<dbReference type="GO" id="GO:0003723">
    <property type="term" value="F:RNA binding"/>
    <property type="evidence" value="ECO:0007669"/>
    <property type="project" value="UniProtKB-UniRule"/>
</dbReference>
<dbReference type="GO" id="GO:0004521">
    <property type="term" value="F:RNA endonuclease activity"/>
    <property type="evidence" value="ECO:0007669"/>
    <property type="project" value="UniProtKB-UniRule"/>
</dbReference>
<dbReference type="GO" id="GO:0006402">
    <property type="term" value="P:mRNA catabolic process"/>
    <property type="evidence" value="ECO:0007669"/>
    <property type="project" value="UniProtKB-UniRule"/>
</dbReference>
<dbReference type="CDD" id="cd00077">
    <property type="entry name" value="HDc"/>
    <property type="match status" value="1"/>
</dbReference>
<dbReference type="CDD" id="cd22431">
    <property type="entry name" value="KH-I_RNaseY"/>
    <property type="match status" value="1"/>
</dbReference>
<dbReference type="Gene3D" id="1.10.3210.10">
    <property type="entry name" value="Hypothetical protein af1432"/>
    <property type="match status" value="1"/>
</dbReference>
<dbReference type="Gene3D" id="3.30.1370.10">
    <property type="entry name" value="K Homology domain, type 1"/>
    <property type="match status" value="1"/>
</dbReference>
<dbReference type="HAMAP" id="MF_00335">
    <property type="entry name" value="RNase_Y"/>
    <property type="match status" value="1"/>
</dbReference>
<dbReference type="InterPro" id="IPR003607">
    <property type="entry name" value="HD/PDEase_dom"/>
</dbReference>
<dbReference type="InterPro" id="IPR006674">
    <property type="entry name" value="HD_domain"/>
</dbReference>
<dbReference type="InterPro" id="IPR006675">
    <property type="entry name" value="HDIG_dom"/>
</dbReference>
<dbReference type="InterPro" id="IPR036612">
    <property type="entry name" value="KH_dom_type_1_sf"/>
</dbReference>
<dbReference type="InterPro" id="IPR017705">
    <property type="entry name" value="Ribonuclease_Y"/>
</dbReference>
<dbReference type="InterPro" id="IPR022711">
    <property type="entry name" value="RNase_Y_N"/>
</dbReference>
<dbReference type="NCBIfam" id="TIGR00277">
    <property type="entry name" value="HDIG"/>
    <property type="match status" value="1"/>
</dbReference>
<dbReference type="NCBIfam" id="TIGR03319">
    <property type="entry name" value="RNase_Y"/>
    <property type="match status" value="1"/>
</dbReference>
<dbReference type="PANTHER" id="PTHR12826">
    <property type="entry name" value="RIBONUCLEASE Y"/>
    <property type="match status" value="1"/>
</dbReference>
<dbReference type="PANTHER" id="PTHR12826:SF15">
    <property type="entry name" value="RIBONUCLEASE Y"/>
    <property type="match status" value="1"/>
</dbReference>
<dbReference type="Pfam" id="PF01966">
    <property type="entry name" value="HD"/>
    <property type="match status" value="1"/>
</dbReference>
<dbReference type="Pfam" id="PF12072">
    <property type="entry name" value="RNase_Y_N"/>
    <property type="match status" value="1"/>
</dbReference>
<dbReference type="SMART" id="SM00471">
    <property type="entry name" value="HDc"/>
    <property type="match status" value="1"/>
</dbReference>
<dbReference type="SUPFAM" id="SSF54791">
    <property type="entry name" value="Eukaryotic type KH-domain (KH-domain type I)"/>
    <property type="match status" value="1"/>
</dbReference>
<dbReference type="SUPFAM" id="SSF109604">
    <property type="entry name" value="HD-domain/PDEase-like"/>
    <property type="match status" value="1"/>
</dbReference>
<dbReference type="PROSITE" id="PS51831">
    <property type="entry name" value="HD"/>
    <property type="match status" value="1"/>
</dbReference>
<organism>
    <name type="scientific">Campylobacter jejuni subsp. jejuni serotype O:23/36 (strain 81-176)</name>
    <dbReference type="NCBI Taxonomy" id="354242"/>
    <lineage>
        <taxon>Bacteria</taxon>
        <taxon>Pseudomonadati</taxon>
        <taxon>Campylobacterota</taxon>
        <taxon>Epsilonproteobacteria</taxon>
        <taxon>Campylobacterales</taxon>
        <taxon>Campylobacteraceae</taxon>
        <taxon>Campylobacter</taxon>
    </lineage>
</organism>
<reference key="1">
    <citation type="submission" date="2006-12" db="EMBL/GenBank/DDBJ databases">
        <authorList>
            <person name="Fouts D.E."/>
            <person name="Nelson K.E."/>
            <person name="Sebastian Y."/>
        </authorList>
    </citation>
    <scope>NUCLEOTIDE SEQUENCE [LARGE SCALE GENOMIC DNA]</scope>
    <source>
        <strain>81-176</strain>
    </source>
</reference>
<feature type="chain" id="PRO_0000344838" description="Ribonuclease Y">
    <location>
        <begin position="1"/>
        <end position="517"/>
    </location>
</feature>
<feature type="transmembrane region" description="Helical" evidence="1">
    <location>
        <begin position="1"/>
        <end position="21"/>
    </location>
</feature>
<feature type="domain" description="KH" evidence="1">
    <location>
        <begin position="207"/>
        <end position="273"/>
    </location>
</feature>
<feature type="domain" description="HD" evidence="2">
    <location>
        <begin position="333"/>
        <end position="426"/>
    </location>
</feature>
<accession>A1W0J3</accession>
<proteinExistence type="inferred from homology"/>
<keyword id="KW-1003">Cell membrane</keyword>
<keyword id="KW-0255">Endonuclease</keyword>
<keyword id="KW-0378">Hydrolase</keyword>
<keyword id="KW-0472">Membrane</keyword>
<keyword id="KW-0540">Nuclease</keyword>
<keyword id="KW-0694">RNA-binding</keyword>
<keyword id="KW-0812">Transmembrane</keyword>
<keyword id="KW-1133">Transmembrane helix</keyword>